<keyword id="KW-0007">Acetylation</keyword>
<keyword id="KW-0067">ATP-binding</keyword>
<keyword id="KW-0963">Cytoplasm</keyword>
<keyword id="KW-0210">Decarboxylase</keyword>
<keyword id="KW-0312">Gluconeogenesis</keyword>
<keyword id="KW-0456">Lyase</keyword>
<keyword id="KW-0464">Manganese</keyword>
<keyword id="KW-0479">Metal-binding</keyword>
<keyword id="KW-0547">Nucleotide-binding</keyword>
<proteinExistence type="inferred from homology"/>
<gene>
    <name evidence="1" type="primary">pckA</name>
    <name type="ordered locus">EFER_3369</name>
</gene>
<feature type="chain" id="PRO_1000125069" description="Phosphoenolpyruvate carboxykinase (ATP)">
    <location>
        <begin position="1"/>
        <end position="540"/>
    </location>
</feature>
<feature type="binding site" evidence="1">
    <location>
        <position position="65"/>
    </location>
    <ligand>
        <name>substrate</name>
    </ligand>
</feature>
<feature type="binding site" evidence="1">
    <location>
        <position position="207"/>
    </location>
    <ligand>
        <name>substrate</name>
    </ligand>
</feature>
<feature type="binding site" evidence="1">
    <location>
        <position position="213"/>
    </location>
    <ligand>
        <name>ATP</name>
        <dbReference type="ChEBI" id="CHEBI:30616"/>
    </ligand>
</feature>
<feature type="binding site" evidence="1">
    <location>
        <position position="213"/>
    </location>
    <ligand>
        <name>Mn(2+)</name>
        <dbReference type="ChEBI" id="CHEBI:29035"/>
    </ligand>
</feature>
<feature type="binding site" evidence="1">
    <location>
        <position position="213"/>
    </location>
    <ligand>
        <name>substrate</name>
    </ligand>
</feature>
<feature type="binding site" evidence="1">
    <location>
        <position position="232"/>
    </location>
    <ligand>
        <name>ATP</name>
        <dbReference type="ChEBI" id="CHEBI:30616"/>
    </ligand>
</feature>
<feature type="binding site" evidence="1">
    <location>
        <position position="232"/>
    </location>
    <ligand>
        <name>Mn(2+)</name>
        <dbReference type="ChEBI" id="CHEBI:29035"/>
    </ligand>
</feature>
<feature type="binding site" evidence="1">
    <location>
        <begin position="248"/>
        <end position="256"/>
    </location>
    <ligand>
        <name>ATP</name>
        <dbReference type="ChEBI" id="CHEBI:30616"/>
    </ligand>
</feature>
<feature type="binding site" evidence="1">
    <location>
        <position position="269"/>
    </location>
    <ligand>
        <name>Mn(2+)</name>
        <dbReference type="ChEBI" id="CHEBI:29035"/>
    </ligand>
</feature>
<feature type="binding site" evidence="1">
    <location>
        <position position="297"/>
    </location>
    <ligand>
        <name>ATP</name>
        <dbReference type="ChEBI" id="CHEBI:30616"/>
    </ligand>
</feature>
<feature type="binding site" evidence="1">
    <location>
        <position position="333"/>
    </location>
    <ligand>
        <name>ATP</name>
        <dbReference type="ChEBI" id="CHEBI:30616"/>
    </ligand>
</feature>
<feature type="binding site" evidence="1">
    <location>
        <position position="333"/>
    </location>
    <ligand>
        <name>substrate</name>
    </ligand>
</feature>
<feature type="binding site" evidence="1">
    <location>
        <begin position="449"/>
        <end position="450"/>
    </location>
    <ligand>
        <name>ATP</name>
        <dbReference type="ChEBI" id="CHEBI:30616"/>
    </ligand>
</feature>
<feature type="binding site" evidence="1">
    <location>
        <position position="455"/>
    </location>
    <ligand>
        <name>ATP</name>
        <dbReference type="ChEBI" id="CHEBI:30616"/>
    </ligand>
</feature>
<feature type="modified residue" description="N6-acetyllysine" evidence="1">
    <location>
        <position position="87"/>
    </location>
</feature>
<feature type="modified residue" description="N6-acetyllysine" evidence="1">
    <location>
        <position position="523"/>
    </location>
</feature>
<organism>
    <name type="scientific">Escherichia fergusonii (strain ATCC 35469 / DSM 13698 / CCUG 18766 / IAM 14443 / JCM 21226 / LMG 7866 / NBRC 102419 / NCTC 12128 / CDC 0568-73)</name>
    <dbReference type="NCBI Taxonomy" id="585054"/>
    <lineage>
        <taxon>Bacteria</taxon>
        <taxon>Pseudomonadati</taxon>
        <taxon>Pseudomonadota</taxon>
        <taxon>Gammaproteobacteria</taxon>
        <taxon>Enterobacterales</taxon>
        <taxon>Enterobacteriaceae</taxon>
        <taxon>Escherichia</taxon>
    </lineage>
</organism>
<reference key="1">
    <citation type="journal article" date="2009" name="PLoS Genet.">
        <title>Organised genome dynamics in the Escherichia coli species results in highly diverse adaptive paths.</title>
        <authorList>
            <person name="Touchon M."/>
            <person name="Hoede C."/>
            <person name="Tenaillon O."/>
            <person name="Barbe V."/>
            <person name="Baeriswyl S."/>
            <person name="Bidet P."/>
            <person name="Bingen E."/>
            <person name="Bonacorsi S."/>
            <person name="Bouchier C."/>
            <person name="Bouvet O."/>
            <person name="Calteau A."/>
            <person name="Chiapello H."/>
            <person name="Clermont O."/>
            <person name="Cruveiller S."/>
            <person name="Danchin A."/>
            <person name="Diard M."/>
            <person name="Dossat C."/>
            <person name="Karoui M.E."/>
            <person name="Frapy E."/>
            <person name="Garry L."/>
            <person name="Ghigo J.M."/>
            <person name="Gilles A.M."/>
            <person name="Johnson J."/>
            <person name="Le Bouguenec C."/>
            <person name="Lescat M."/>
            <person name="Mangenot S."/>
            <person name="Martinez-Jehanne V."/>
            <person name="Matic I."/>
            <person name="Nassif X."/>
            <person name="Oztas S."/>
            <person name="Petit M.A."/>
            <person name="Pichon C."/>
            <person name="Rouy Z."/>
            <person name="Ruf C.S."/>
            <person name="Schneider D."/>
            <person name="Tourret J."/>
            <person name="Vacherie B."/>
            <person name="Vallenet D."/>
            <person name="Medigue C."/>
            <person name="Rocha E.P.C."/>
            <person name="Denamur E."/>
        </authorList>
    </citation>
    <scope>NUCLEOTIDE SEQUENCE [LARGE SCALE GENOMIC DNA]</scope>
    <source>
        <strain>ATCC 35469 / DSM 13698 / BCRC 15582 / CCUG 18766 / IAM 14443 / JCM 21226 / LMG 7866 / NBRC 102419 / NCTC 12128 / CDC 0568-73</strain>
    </source>
</reference>
<sequence>MRVNKSLTPQDLMAYGINDVQDIVYNPSYDLLFQEELDPNLKGYERGVLTNLGAVAVDTGVFTGRSPKDKYIVRDDTTRDTFWWADKGKGKNDNKPLSPETWQHLKGLVTNQLSGKRLFVVDAFCGANADTRLSVRFITEVAWQAHFVKNMFIRPTDEELVDFEPDFIVMNGAKCTNPQWKEQGLNSENFVAFNLTERMQLIGGTWYGGEMKKGMFSMMNYLLPLKGIASMHCSANVGEKGDVAVFFGLSGTGKTTLSTDPKRRLIGDDEHGWDDDGVFNFEGGCYAKTIKLSKEAEPEIYNAIRRDALLENVTVREDGTIDFDDGSKTENTRVSYPIYHIDNIVKPVSKAGHATKVIFLTADAFGVLPPVSRLTADQTQYHFLSGFTAKLAGTERGITEPTPTFSACFGAAFLSLHPTQYAEVLVKRMQAAGAQAYLVNTGWNGTGKRISIKDTRAIIDAILNGSLDNAETFTLPMFNLAIPTELPGVDTKILDPRNTYASSEQWQEKAETLAKLFIDNFDKYTDTPAGAALVEAGPKL</sequence>
<accession>B7LSA4</accession>
<protein>
    <recommendedName>
        <fullName evidence="1">Phosphoenolpyruvate carboxykinase (ATP)</fullName>
        <shortName evidence="1">PCK</shortName>
        <shortName evidence="1">PEP carboxykinase</shortName>
        <shortName evidence="1">PEPCK</shortName>
        <ecNumber evidence="1">4.1.1.49</ecNumber>
    </recommendedName>
</protein>
<name>PCKA_ESCF3</name>
<evidence type="ECO:0000255" key="1">
    <source>
        <dbReference type="HAMAP-Rule" id="MF_00453"/>
    </source>
</evidence>
<comment type="function">
    <text evidence="1">Involved in the gluconeogenesis. Catalyzes the conversion of oxaloacetate (OAA) to phosphoenolpyruvate (PEP) through direct phosphoryl transfer between the nucleoside triphosphate and OAA.</text>
</comment>
<comment type="catalytic activity">
    <reaction evidence="1">
        <text>oxaloacetate + ATP = phosphoenolpyruvate + ADP + CO2</text>
        <dbReference type="Rhea" id="RHEA:18617"/>
        <dbReference type="ChEBI" id="CHEBI:16452"/>
        <dbReference type="ChEBI" id="CHEBI:16526"/>
        <dbReference type="ChEBI" id="CHEBI:30616"/>
        <dbReference type="ChEBI" id="CHEBI:58702"/>
        <dbReference type="ChEBI" id="CHEBI:456216"/>
        <dbReference type="EC" id="4.1.1.49"/>
    </reaction>
</comment>
<comment type="cofactor">
    <cofactor evidence="1">
        <name>Mn(2+)</name>
        <dbReference type="ChEBI" id="CHEBI:29035"/>
    </cofactor>
    <text evidence="1">Binds 1 Mn(2+) ion per subunit.</text>
</comment>
<comment type="pathway">
    <text evidence="1">Carbohydrate biosynthesis; gluconeogenesis.</text>
</comment>
<comment type="subunit">
    <text evidence="1">Monomer.</text>
</comment>
<comment type="subcellular location">
    <subcellularLocation>
        <location evidence="1">Cytoplasm</location>
    </subcellularLocation>
</comment>
<comment type="similarity">
    <text evidence="1">Belongs to the phosphoenolpyruvate carboxykinase (ATP) family.</text>
</comment>
<dbReference type="EC" id="4.1.1.49" evidence="1"/>
<dbReference type="EMBL" id="CU928158">
    <property type="protein sequence ID" value="CAQ90847.1"/>
    <property type="molecule type" value="Genomic_DNA"/>
</dbReference>
<dbReference type="RefSeq" id="WP_001265635.1">
    <property type="nucleotide sequence ID" value="NC_011740.1"/>
</dbReference>
<dbReference type="SMR" id="B7LSA4"/>
<dbReference type="GeneID" id="75060023"/>
<dbReference type="KEGG" id="efe:EFER_3369"/>
<dbReference type="HOGENOM" id="CLU_018247_0_1_6"/>
<dbReference type="OrthoDB" id="9806325at2"/>
<dbReference type="UniPathway" id="UPA00138"/>
<dbReference type="Proteomes" id="UP000000745">
    <property type="component" value="Chromosome"/>
</dbReference>
<dbReference type="GO" id="GO:0005829">
    <property type="term" value="C:cytosol"/>
    <property type="evidence" value="ECO:0007669"/>
    <property type="project" value="TreeGrafter"/>
</dbReference>
<dbReference type="GO" id="GO:0005524">
    <property type="term" value="F:ATP binding"/>
    <property type="evidence" value="ECO:0007669"/>
    <property type="project" value="UniProtKB-UniRule"/>
</dbReference>
<dbReference type="GO" id="GO:0046872">
    <property type="term" value="F:metal ion binding"/>
    <property type="evidence" value="ECO:0007669"/>
    <property type="project" value="UniProtKB-KW"/>
</dbReference>
<dbReference type="GO" id="GO:0004612">
    <property type="term" value="F:phosphoenolpyruvate carboxykinase (ATP) activity"/>
    <property type="evidence" value="ECO:0007669"/>
    <property type="project" value="UniProtKB-UniRule"/>
</dbReference>
<dbReference type="GO" id="GO:0006094">
    <property type="term" value="P:gluconeogenesis"/>
    <property type="evidence" value="ECO:0007669"/>
    <property type="project" value="UniProtKB-UniRule"/>
</dbReference>
<dbReference type="CDD" id="cd00484">
    <property type="entry name" value="PEPCK_ATP"/>
    <property type="match status" value="1"/>
</dbReference>
<dbReference type="FunFam" id="2.170.8.10:FF:000001">
    <property type="entry name" value="Phosphoenolpyruvate carboxykinase (ATP)"/>
    <property type="match status" value="1"/>
</dbReference>
<dbReference type="FunFam" id="3.40.449.10:FF:000001">
    <property type="entry name" value="Phosphoenolpyruvate carboxykinase (ATP)"/>
    <property type="match status" value="1"/>
</dbReference>
<dbReference type="Gene3D" id="3.90.228.20">
    <property type="match status" value="1"/>
</dbReference>
<dbReference type="Gene3D" id="3.40.449.10">
    <property type="entry name" value="Phosphoenolpyruvate Carboxykinase, domain 1"/>
    <property type="match status" value="1"/>
</dbReference>
<dbReference type="Gene3D" id="2.170.8.10">
    <property type="entry name" value="Phosphoenolpyruvate Carboxykinase, domain 2"/>
    <property type="match status" value="1"/>
</dbReference>
<dbReference type="HAMAP" id="MF_00453">
    <property type="entry name" value="PEPCK_ATP"/>
    <property type="match status" value="1"/>
</dbReference>
<dbReference type="InterPro" id="IPR001272">
    <property type="entry name" value="PEP_carboxykinase_ATP"/>
</dbReference>
<dbReference type="InterPro" id="IPR013035">
    <property type="entry name" value="PEP_carboxykinase_C"/>
</dbReference>
<dbReference type="InterPro" id="IPR008210">
    <property type="entry name" value="PEP_carboxykinase_N"/>
</dbReference>
<dbReference type="InterPro" id="IPR015994">
    <property type="entry name" value="PEPCK_ATP_CS"/>
</dbReference>
<dbReference type="NCBIfam" id="TIGR00224">
    <property type="entry name" value="pckA"/>
    <property type="match status" value="1"/>
</dbReference>
<dbReference type="NCBIfam" id="NF006819">
    <property type="entry name" value="PRK09344.1-1"/>
    <property type="match status" value="1"/>
</dbReference>
<dbReference type="NCBIfam" id="NF006820">
    <property type="entry name" value="PRK09344.1-2"/>
    <property type="match status" value="1"/>
</dbReference>
<dbReference type="NCBIfam" id="NF006821">
    <property type="entry name" value="PRK09344.1-3"/>
    <property type="match status" value="1"/>
</dbReference>
<dbReference type="PANTHER" id="PTHR30031:SF0">
    <property type="entry name" value="PHOSPHOENOLPYRUVATE CARBOXYKINASE (ATP)"/>
    <property type="match status" value="1"/>
</dbReference>
<dbReference type="PANTHER" id="PTHR30031">
    <property type="entry name" value="PHOSPHOENOLPYRUVATE CARBOXYKINASE ATP"/>
    <property type="match status" value="1"/>
</dbReference>
<dbReference type="Pfam" id="PF01293">
    <property type="entry name" value="PEPCK_ATP"/>
    <property type="match status" value="1"/>
</dbReference>
<dbReference type="PIRSF" id="PIRSF006294">
    <property type="entry name" value="PEP_crbxkin"/>
    <property type="match status" value="1"/>
</dbReference>
<dbReference type="SUPFAM" id="SSF68923">
    <property type="entry name" value="PEP carboxykinase N-terminal domain"/>
    <property type="match status" value="1"/>
</dbReference>
<dbReference type="SUPFAM" id="SSF53795">
    <property type="entry name" value="PEP carboxykinase-like"/>
    <property type="match status" value="1"/>
</dbReference>
<dbReference type="PROSITE" id="PS00532">
    <property type="entry name" value="PEPCK_ATP"/>
    <property type="match status" value="1"/>
</dbReference>